<accession>P38781</accession>
<accession>D3DL05</accession>
<reference key="1">
    <citation type="journal article" date="1994" name="Science">
        <title>Complete nucleotide sequence of Saccharomyces cerevisiae chromosome VIII.</title>
        <authorList>
            <person name="Johnston M."/>
            <person name="Andrews S."/>
            <person name="Brinkman R."/>
            <person name="Cooper J."/>
            <person name="Ding H."/>
            <person name="Dover J."/>
            <person name="Du Z."/>
            <person name="Favello A."/>
            <person name="Fulton L."/>
            <person name="Gattung S."/>
            <person name="Geisel C."/>
            <person name="Kirsten J."/>
            <person name="Kucaba T."/>
            <person name="Hillier L.W."/>
            <person name="Jier M."/>
            <person name="Johnston L."/>
            <person name="Langston Y."/>
            <person name="Latreille P."/>
            <person name="Louis E.J."/>
            <person name="Macri C."/>
            <person name="Mardis E."/>
            <person name="Menezes S."/>
            <person name="Mouser L."/>
            <person name="Nhan M."/>
            <person name="Rifkin L."/>
            <person name="Riles L."/>
            <person name="St Peter H."/>
            <person name="Trevaskis E."/>
            <person name="Vaughan K."/>
            <person name="Vignati D."/>
            <person name="Wilcox L."/>
            <person name="Wohldman P."/>
            <person name="Waterston R."/>
            <person name="Wilson R."/>
            <person name="Vaudin M."/>
        </authorList>
    </citation>
    <scope>NUCLEOTIDE SEQUENCE [LARGE SCALE GENOMIC DNA]</scope>
    <source>
        <strain>ATCC 204508 / S288c</strain>
    </source>
</reference>
<reference key="2">
    <citation type="submission" date="2004-02" db="EMBL/GenBank/DDBJ databases">
        <authorList>
            <person name="Fisk D."/>
            <person name="Cherry J.M."/>
        </authorList>
    </citation>
    <scope>SEQUENCE REVISION TO N-TERMINUS</scope>
</reference>
<reference key="3">
    <citation type="journal article" date="2014" name="G3 (Bethesda)">
        <title>The reference genome sequence of Saccharomyces cerevisiae: Then and now.</title>
        <authorList>
            <person name="Engel S.R."/>
            <person name="Dietrich F.S."/>
            <person name="Fisk D.G."/>
            <person name="Binkley G."/>
            <person name="Balakrishnan R."/>
            <person name="Costanzo M.C."/>
            <person name="Dwight S.S."/>
            <person name="Hitz B.C."/>
            <person name="Karra K."/>
            <person name="Nash R.S."/>
            <person name="Weng S."/>
            <person name="Wong E.D."/>
            <person name="Lloyd P."/>
            <person name="Skrzypek M.S."/>
            <person name="Miyasato S.R."/>
            <person name="Simison M."/>
            <person name="Cherry J.M."/>
        </authorList>
    </citation>
    <scope>GENOME REANNOTATION</scope>
    <source>
        <strain>ATCC 204508 / S288c</strain>
    </source>
</reference>
<reference key="4">
    <citation type="journal article" date="2001" name="Mol. Cell">
        <title>A Rsc3/Rsc30 zinc cluster dimer reveals novel roles for the chromatin remodeler RSC in gene expression and cell cycle control.</title>
        <authorList>
            <person name="Angus-Hill M.L."/>
            <person name="Schlichter A."/>
            <person name="Roberts D."/>
            <person name="Erdjument-Bromage H."/>
            <person name="Tempst P."/>
            <person name="Cairns B.R."/>
        </authorList>
    </citation>
    <scope>PROTEIN SEQUENCE OF 28-37</scope>
    <scope>IDENTIFICATION IN THE RSC COMPLEX</scope>
    <scope>FUNCTION OF THE RSC COMPLEX</scope>
    <scope>HETEROMERIC COMPLEX FORMATION WITH RSC3</scope>
    <scope>MUTAGENESIS OF CYS-15</scope>
</reference>
<reference key="5">
    <citation type="journal article" date="1996" name="Cell">
        <title>RSC, an essential, abundant chromatin-remodeling complex.</title>
        <authorList>
            <person name="Cairns B.R."/>
            <person name="Lorch Y."/>
            <person name="Li Y."/>
            <person name="Zhang M."/>
            <person name="Lacomis L."/>
            <person name="Erdjument-Bromage H."/>
            <person name="Tempst P."/>
            <person name="Du J."/>
            <person name="Laurent B.C."/>
            <person name="Kornberg R.D."/>
        </authorList>
    </citation>
    <scope>FUNCTION OF THE RSC COMPLEX</scope>
    <scope>COMPOSITION OF THE RSC COMPLEX</scope>
</reference>
<reference key="6">
    <citation type="journal article" date="1999" name="Cell">
        <title>Histone octamer transfer by a chromatin-remodeling complex.</title>
        <authorList>
            <person name="Lorch Y."/>
            <person name="Zhang M."/>
            <person name="Kornberg R.D."/>
        </authorList>
    </citation>
    <scope>FUNCTION OF THE RSC COMPLEX</scope>
</reference>
<reference key="7">
    <citation type="journal article" date="1999" name="EMBO J.">
        <title>Transcriptional repression of the yeast CHA1 gene requires the chromatin-remodeling complex RSC.</title>
        <authorList>
            <person name="Moreira J.M.A."/>
            <person name="Holmberg S."/>
        </authorList>
    </citation>
    <scope>FUNCTION OF THE RSC COMPLEX</scope>
</reference>
<reference key="8">
    <citation type="journal article" date="2002" name="Genes Dev.">
        <title>Chromatin remodeling by RSC involves ATP-dependent DNA translocation.</title>
        <authorList>
            <person name="Saha A."/>
            <person name="Wittmeyer J."/>
            <person name="Cairns B.R."/>
        </authorList>
    </citation>
    <scope>FUNCTION OF THE RSC COMPLEX</scope>
</reference>
<reference key="9">
    <citation type="journal article" date="2002" name="Genetics">
        <title>Yeast RSC function is required for organization of the cellular cytoskeleton via an alternative PKC1 pathway.</title>
        <authorList>
            <person name="Chai B."/>
            <person name="Hsu J.-M."/>
            <person name="Du J."/>
            <person name="Laurent B.C."/>
        </authorList>
    </citation>
    <scope>FUNCTION OF THE RSC COMPLEX</scope>
</reference>
<reference key="10">
    <citation type="journal article" date="2003" name="Mol. Cell. Biol.">
        <title>The yeast RSC chromatin-remodeling complex is required for kinetochore function in chromosome segregation.</title>
        <authorList>
            <person name="Hsu J.-M."/>
            <person name="Huang J."/>
            <person name="Meluh P.B."/>
            <person name="Laurent B.C."/>
        </authorList>
    </citation>
    <scope>FUNCTION OF THE RSC COMPLEX</scope>
    <scope>SUBCELLULAR LOCATION</scope>
    <scope>INTERACTION OF THE RSC COMPLEX WITH HISTONES</scope>
</reference>
<reference key="11">
    <citation type="journal article" date="1999" name="Mol. Cell">
        <title>Two functionally distinct forms of the RSC nucleosome-remodeling complex, containing essential AT hook, BAH, and bromodomains.</title>
        <authorList>
            <person name="Cairns B.R."/>
            <person name="Schlichter A."/>
            <person name="Erdjument-Bromage H."/>
            <person name="Tempst P."/>
            <person name="Kornberg R.D."/>
            <person name="Winston F."/>
        </authorList>
    </citation>
    <scope>COMPOSITION OF THE RSC COMPLEX</scope>
</reference>
<reference key="12">
    <citation type="journal article" date="2006" name="Genetics">
        <title>The RSC chromatin remodeling complex bears an essential fungal-specific protein module with broad functional roles.</title>
        <authorList>
            <person name="Wilson B."/>
            <person name="Erdjument-Bromage H."/>
            <person name="Tempst P."/>
            <person name="Cairns B.R."/>
        </authorList>
    </citation>
    <scope>FUNCTION</scope>
    <scope>INTERACTION WITH NPL6</scope>
</reference>
<reference key="13">
    <citation type="journal article" date="2007" name="J. Proteome Res.">
        <title>Large-scale phosphorylation analysis of alpha-factor-arrested Saccharomyces cerevisiae.</title>
        <authorList>
            <person name="Li X."/>
            <person name="Gerber S.A."/>
            <person name="Rudner A.D."/>
            <person name="Beausoleil S.A."/>
            <person name="Haas W."/>
            <person name="Villen J."/>
            <person name="Elias J.E."/>
            <person name="Gygi S.P."/>
        </authorList>
    </citation>
    <scope>IDENTIFICATION BY MASS SPECTROMETRY [LARGE SCALE ANALYSIS]</scope>
    <source>
        <strain>ADR376</strain>
    </source>
</reference>
<reference key="14">
    <citation type="journal article" date="2008" name="Mol. Cell. Proteomics">
        <title>A multidimensional chromatography technology for in-depth phosphoproteome analysis.</title>
        <authorList>
            <person name="Albuquerque C.P."/>
            <person name="Smolka M.B."/>
            <person name="Payne S.H."/>
            <person name="Bafna V."/>
            <person name="Eng J."/>
            <person name="Zhou H."/>
        </authorList>
    </citation>
    <scope>IDENTIFICATION BY MASS SPECTROMETRY [LARGE SCALE ANALYSIS]</scope>
</reference>
<reference key="15">
    <citation type="journal article" date="2009" name="Science">
        <title>Global analysis of Cdk1 substrate phosphorylation sites provides insights into evolution.</title>
        <authorList>
            <person name="Holt L.J."/>
            <person name="Tuch B.B."/>
            <person name="Villen J."/>
            <person name="Johnson A.D."/>
            <person name="Gygi S.P."/>
            <person name="Morgan D.O."/>
        </authorList>
    </citation>
    <scope>PHOSPHORYLATION [LARGE SCALE ANALYSIS] AT SER-150</scope>
    <scope>IDENTIFICATION BY MASS SPECTROMETRY [LARGE SCALE ANALYSIS]</scope>
</reference>
<reference key="16">
    <citation type="journal article" date="2012" name="Proc. Natl. Acad. Sci. U.S.A.">
        <title>N-terminal acetylome analyses and functional insights of the N-terminal acetyltransferase NatB.</title>
        <authorList>
            <person name="Van Damme P."/>
            <person name="Lasa M."/>
            <person name="Polevoda B."/>
            <person name="Gazquez C."/>
            <person name="Elosegui-Artola A."/>
            <person name="Kim D.S."/>
            <person name="De Juan-Pardo E."/>
            <person name="Demeyer K."/>
            <person name="Hole K."/>
            <person name="Larrea E."/>
            <person name="Timmerman E."/>
            <person name="Prieto J."/>
            <person name="Arnesen T."/>
            <person name="Sherman F."/>
            <person name="Gevaert K."/>
            <person name="Aldabe R."/>
        </authorList>
    </citation>
    <scope>IDENTIFICATION BY MASS SPECTROMETRY [LARGE SCALE ANALYSIS]</scope>
</reference>
<gene>
    <name type="primary">RSC30</name>
    <name type="ordered locus">YHR056C</name>
</gene>
<organism>
    <name type="scientific">Saccharomyces cerevisiae (strain ATCC 204508 / S288c)</name>
    <name type="common">Baker's yeast</name>
    <dbReference type="NCBI Taxonomy" id="559292"/>
    <lineage>
        <taxon>Eukaryota</taxon>
        <taxon>Fungi</taxon>
        <taxon>Dikarya</taxon>
        <taxon>Ascomycota</taxon>
        <taxon>Saccharomycotina</taxon>
        <taxon>Saccharomycetes</taxon>
        <taxon>Saccharomycetales</taxon>
        <taxon>Saccharomycetaceae</taxon>
        <taxon>Saccharomyces</taxon>
    </lineage>
</organism>
<comment type="function">
    <text evidence="3 4 5 6 7 8 9 10">Component of the chromatin structure-remodeling complex (RSC), which is involved in transcription regulation and nucleosome positioning. RSC is responsible for the transfer of a histone octamer from a nucleosome core particle to naked DNA. The reaction requires ATP and involves an activated RSC-nucleosome intermediate. Remodeling reaction also involves DNA translocation, DNA twist and conformational change. As a reconfigurer of centromeric and flanking nucleosomes, RSC complex is required both for proper kinetochore function in chromosome segregation and, via a PKC1-dependent signaling pathway, for organization of the cellular cytoskeleton. This subunit is required for transcription of ribosomal protein genes and genes involved in the integrity of the cell wall. Together with HTL1, LDB7, NPL6, RSC3 components, defines a fungal-specific module within the RSC complex that plays a role in many cellular functions including the maintenance of cell wall integrity.</text>
</comment>
<comment type="subunit">
    <text evidence="5 8 9">Forms a heteromer with RSC3. Interacts with NPL6. Component of the two forms of the RSC complex composed of at least either RSC1 or RSC2, and ARP7, ARP9, LDB7, NPL6, RSC3, RSC30, RSC4, RSC58, RSC6, RSC8, RSC9, SFH1, STH1, HTL1 and probably RTT102. The complexes interact with histone and histone variant components of centromeric chromatin. Component of a fungal-specific module (HTL1-LDB7-NPL6-RSC3-RSC30) within the RSC complex.</text>
</comment>
<comment type="interaction">
    <interactant intactId="EBI-24549">
        <id>P38781</id>
    </interactant>
    <interactant intactId="EBI-22058">
        <id>Q06639</id>
        <label>RSC3</label>
    </interactant>
    <organismsDiffer>false</organismsDiffer>
    <experiments>6</experiments>
</comment>
<comment type="subcellular location">
    <subcellularLocation>
        <location evidence="1 8">Nucleus</location>
    </subcellularLocation>
    <text>Localizes to centromeric and flanking chromatin. Association with these loci is dependent on STH1.</text>
</comment>
<sequence>MMDMQVRKVRKPPACTQCRKRKIGCDRAKPICGNCVKYNKPDCFYPDGPGKMVAVPSASGMSTHGNGQGSNHFSQGNGVNQKNVMIQTQYPIMQTSIEAFNFSFNPSVDTAMQWTKAASYQNNNTNNNTAPRQNSSTVSSNVHGNTIVRSDSPDVPSMDQIREYNTRLQLVNAQSFDYTDNPYSFNVGINQDSAVFDLMTSPFTQEEVLIKEIDFLKNKLLDLQSLQLKSLKEKSNLNADNTTANKINKTGENSKKGKVDGKRAGFDHQTSRTSQSSQKYFTALTITDVQSLVQVKPLKDTPNYLFTKNFIIFRDHYLFKFYNILHDICHINQFKVSPPNNKNHQQYMEVCKVNFPPKAIIIETLNSESLNNLNIEEFLPIFDKTLLLEFVHNSFPNGDTCPSFSTVDLPLSQLTKLGELTVLLLLLNDSMTLFNKQAINNHVSALMNNLRLIRSQITLINLEYYDQETIKFIAITKFYESLYMHDDHKSSLDEDLSCLLSFQIKDFKLFHFLKKMYYSRHSLLGQSSFMVPAAENLSPIPASIDTNDIPLIANDLKLLETQAKLINILQGVPFYLPVNLTKIESLLETLTMGVSNTVDLYFHDNEVRKEWKDTLNFINTIVYTNFFLFVQNESSLSMAVQHSSNNNKTSNSERCAKDLMKIISNMHIFYSITFNFIFPIKSIKSFSSGNNRFHSNGKEFLFANHFIEILQNFIAITFAIFQRCEVILYDEFYKNLSNEEINVQLLLIHDKILEILKKIEIIVSFLRDEMNSNGSFKSIKGFNKVLNLIKYMLRFSKKKQNFARNSDNNNVTDYSQSAKNKNVLLKFPVSELNRIYLKFKEISDFLMEREVVQRSIIIDKDLESDNLGITTANFNDFYDAFYN</sequence>
<feature type="chain" id="PRO_0000114974" description="Chromatin structure-remodeling complex protein RSC30">
    <location>
        <begin position="1"/>
        <end position="883"/>
    </location>
</feature>
<feature type="DNA-binding region" description="Zn(2)-C6 fungal-type" evidence="1">
    <location>
        <begin position="14"/>
        <end position="45"/>
    </location>
</feature>
<feature type="region of interest" description="Disordered" evidence="2">
    <location>
        <begin position="121"/>
        <end position="157"/>
    </location>
</feature>
<feature type="region of interest" description="Disordered" evidence="2">
    <location>
        <begin position="241"/>
        <end position="273"/>
    </location>
</feature>
<feature type="compositionally biased region" description="Polar residues" evidence="2">
    <location>
        <begin position="130"/>
        <end position="149"/>
    </location>
</feature>
<feature type="compositionally biased region" description="Polar residues" evidence="2">
    <location>
        <begin position="241"/>
        <end position="251"/>
    </location>
</feature>
<feature type="compositionally biased region" description="Basic and acidic residues" evidence="2">
    <location>
        <begin position="252"/>
        <end position="270"/>
    </location>
</feature>
<feature type="modified residue" description="Phosphoserine" evidence="11">
    <location>
        <position position="150"/>
    </location>
</feature>
<feature type="mutagenesis site" description="Complete inactivation." evidence="5">
    <original>C</original>
    <variation>G</variation>
    <location>
        <position position="15"/>
    </location>
</feature>
<feature type="strand" evidence="12">
    <location>
        <begin position="198"/>
        <end position="203"/>
    </location>
</feature>
<feature type="helix" evidence="12">
    <location>
        <begin position="205"/>
        <end position="226"/>
    </location>
</feature>
<name>RSC30_YEAST</name>
<evidence type="ECO:0000255" key="1">
    <source>
        <dbReference type="PROSITE-ProRule" id="PRU00227"/>
    </source>
</evidence>
<evidence type="ECO:0000256" key="2">
    <source>
        <dbReference type="SAM" id="MobiDB-lite"/>
    </source>
</evidence>
<evidence type="ECO:0000269" key="3">
    <source>
    </source>
</evidence>
<evidence type="ECO:0000269" key="4">
    <source>
    </source>
</evidence>
<evidence type="ECO:0000269" key="5">
    <source>
    </source>
</evidence>
<evidence type="ECO:0000269" key="6">
    <source>
    </source>
</evidence>
<evidence type="ECO:0000269" key="7">
    <source>
    </source>
</evidence>
<evidence type="ECO:0000269" key="8">
    <source>
    </source>
</evidence>
<evidence type="ECO:0000269" key="9">
    <source>
    </source>
</evidence>
<evidence type="ECO:0000269" key="10">
    <source>
    </source>
</evidence>
<evidence type="ECO:0007744" key="11">
    <source>
    </source>
</evidence>
<evidence type="ECO:0007829" key="12">
    <source>
        <dbReference type="PDB" id="6V8O"/>
    </source>
</evidence>
<protein>
    <recommendedName>
        <fullName>Chromatin structure-remodeling complex protein RSC30</fullName>
    </recommendedName>
    <alternativeName>
        <fullName>Remodel the structure of chromatin complex subunit 30</fullName>
    </alternativeName>
</protein>
<dbReference type="EMBL" id="U00061">
    <property type="protein sequence ID" value="AAB68385.2"/>
    <property type="molecule type" value="Genomic_DNA"/>
</dbReference>
<dbReference type="EMBL" id="BK006934">
    <property type="protein sequence ID" value="DAA06749.1"/>
    <property type="molecule type" value="Genomic_DNA"/>
</dbReference>
<dbReference type="RefSeq" id="NP_011923.2">
    <property type="nucleotide sequence ID" value="NM_001179186.2"/>
</dbReference>
<dbReference type="PDB" id="6K15">
    <property type="method" value="EM"/>
    <property type="resolution" value="3.40 A"/>
    <property type="chains" value="C=1-883"/>
</dbReference>
<dbReference type="PDB" id="6KW3">
    <property type="method" value="EM"/>
    <property type="resolution" value="7.13 A"/>
    <property type="chains" value="C=1-883"/>
</dbReference>
<dbReference type="PDB" id="6KW4">
    <property type="method" value="EM"/>
    <property type="resolution" value="7.55 A"/>
    <property type="chains" value="C=1-883"/>
</dbReference>
<dbReference type="PDB" id="6KW5">
    <property type="method" value="EM"/>
    <property type="resolution" value="10.13 A"/>
    <property type="chains" value="C=1-883"/>
</dbReference>
<dbReference type="PDB" id="6V8O">
    <property type="method" value="EM"/>
    <property type="resolution" value="3.07 A"/>
    <property type="chains" value="S=1-883"/>
</dbReference>
<dbReference type="PDB" id="6V92">
    <property type="method" value="EM"/>
    <property type="resolution" value="20.00 A"/>
    <property type="chains" value="S=1-883"/>
</dbReference>
<dbReference type="PDBsum" id="6K15"/>
<dbReference type="PDBsum" id="6KW3"/>
<dbReference type="PDBsum" id="6KW4"/>
<dbReference type="PDBsum" id="6KW5"/>
<dbReference type="PDBsum" id="6V8O"/>
<dbReference type="PDBsum" id="6V92"/>
<dbReference type="EMDB" id="EMD-0777"/>
<dbReference type="EMDB" id="EMD-0778"/>
<dbReference type="EMDB" id="EMD-0779"/>
<dbReference type="EMDB" id="EMD-21107"/>
<dbReference type="EMDB" id="EMD-21114"/>
<dbReference type="EMDB" id="EMD-9905"/>
<dbReference type="SMR" id="P38781"/>
<dbReference type="BioGRID" id="36488">
    <property type="interactions" value="64"/>
</dbReference>
<dbReference type="ComplexPortal" id="CPX-1888">
    <property type="entry name" value="RSC chromatin remodelling complex, variant RSC2"/>
</dbReference>
<dbReference type="ComplexPortal" id="CPX-1889">
    <property type="entry name" value="RSC chromatin remodelling complex, variant RSC1"/>
</dbReference>
<dbReference type="DIP" id="DIP-4275N"/>
<dbReference type="FunCoup" id="P38781">
    <property type="interactions" value="694"/>
</dbReference>
<dbReference type="IntAct" id="P38781">
    <property type="interactions" value="40"/>
</dbReference>
<dbReference type="STRING" id="4932.YHR056C"/>
<dbReference type="iPTMnet" id="P38781"/>
<dbReference type="PaxDb" id="4932-YHR056C"/>
<dbReference type="PeptideAtlas" id="P38781"/>
<dbReference type="TopDownProteomics" id="P38781"/>
<dbReference type="EnsemblFungi" id="YHR056C_mRNA">
    <property type="protein sequence ID" value="YHR056C"/>
    <property type="gene ID" value="YHR056C"/>
</dbReference>
<dbReference type="GeneID" id="856453"/>
<dbReference type="KEGG" id="sce:YHR056C"/>
<dbReference type="AGR" id="SGD:S000001098"/>
<dbReference type="SGD" id="S000001098">
    <property type="gene designation" value="RSC30"/>
</dbReference>
<dbReference type="VEuPathDB" id="FungiDB:YHR056C"/>
<dbReference type="eggNOG" id="ENOG502QWTJ">
    <property type="taxonomic scope" value="Eukaryota"/>
</dbReference>
<dbReference type="GeneTree" id="ENSGT00940000176763"/>
<dbReference type="HOGENOM" id="CLU_017671_0_0_1"/>
<dbReference type="InParanoid" id="P38781"/>
<dbReference type="OMA" id="DICHINQ"/>
<dbReference type="OrthoDB" id="2943660at2759"/>
<dbReference type="BioCyc" id="YEAST:G3O-31110-MONOMER"/>
<dbReference type="BioGRID-ORCS" id="856453">
    <property type="hits" value="0 hits in 13 CRISPR screens"/>
</dbReference>
<dbReference type="PRO" id="PR:P38781"/>
<dbReference type="Proteomes" id="UP000002311">
    <property type="component" value="Chromosome VIII"/>
</dbReference>
<dbReference type="RNAct" id="P38781">
    <property type="molecule type" value="protein"/>
</dbReference>
<dbReference type="GO" id="GO:0000785">
    <property type="term" value="C:chromatin"/>
    <property type="evidence" value="ECO:0000303"/>
    <property type="project" value="ComplexPortal"/>
</dbReference>
<dbReference type="GO" id="GO:0005634">
    <property type="term" value="C:nucleus"/>
    <property type="evidence" value="ECO:0000318"/>
    <property type="project" value="GO_Central"/>
</dbReference>
<dbReference type="GO" id="GO:0016586">
    <property type="term" value="C:RSC-type complex"/>
    <property type="evidence" value="ECO:0000314"/>
    <property type="project" value="UniProtKB"/>
</dbReference>
<dbReference type="GO" id="GO:0000981">
    <property type="term" value="F:DNA-binding transcription factor activity, RNA polymerase II-specific"/>
    <property type="evidence" value="ECO:0000318"/>
    <property type="project" value="GO_Central"/>
</dbReference>
<dbReference type="GO" id="GO:0043565">
    <property type="term" value="F:sequence-specific DNA binding"/>
    <property type="evidence" value="ECO:0000314"/>
    <property type="project" value="SGD"/>
</dbReference>
<dbReference type="GO" id="GO:0008270">
    <property type="term" value="F:zinc ion binding"/>
    <property type="evidence" value="ECO:0007669"/>
    <property type="project" value="InterPro"/>
</dbReference>
<dbReference type="GO" id="GO:0006338">
    <property type="term" value="P:chromatin remodeling"/>
    <property type="evidence" value="ECO:0000314"/>
    <property type="project" value="SGD"/>
</dbReference>
<dbReference type="GO" id="GO:0006303">
    <property type="term" value="P:double-strand break repair via nonhomologous end joining"/>
    <property type="evidence" value="ECO:0000314"/>
    <property type="project" value="SGD"/>
</dbReference>
<dbReference type="GO" id="GO:0006337">
    <property type="term" value="P:nucleosome disassembly"/>
    <property type="evidence" value="ECO:0000314"/>
    <property type="project" value="SGD"/>
</dbReference>
<dbReference type="GO" id="GO:0045944">
    <property type="term" value="P:positive regulation of transcription by RNA polymerase II"/>
    <property type="evidence" value="ECO:0000318"/>
    <property type="project" value="GO_Central"/>
</dbReference>
<dbReference type="GO" id="GO:0006355">
    <property type="term" value="P:regulation of DNA-templated transcription"/>
    <property type="evidence" value="ECO:0000315"/>
    <property type="project" value="SGD"/>
</dbReference>
<dbReference type="GO" id="GO:0006368">
    <property type="term" value="P:transcription elongation by RNA polymerase II"/>
    <property type="evidence" value="ECO:0000314"/>
    <property type="project" value="SGD"/>
</dbReference>
<dbReference type="CDD" id="cd00067">
    <property type="entry name" value="GAL4"/>
    <property type="match status" value="1"/>
</dbReference>
<dbReference type="Gene3D" id="4.10.240.10">
    <property type="entry name" value="Zn(2)-C6 fungal-type DNA-binding domain"/>
    <property type="match status" value="1"/>
</dbReference>
<dbReference type="InterPro" id="IPR050675">
    <property type="entry name" value="OAF3"/>
</dbReference>
<dbReference type="InterPro" id="IPR036864">
    <property type="entry name" value="Zn2-C6_fun-type_DNA-bd_sf"/>
</dbReference>
<dbReference type="InterPro" id="IPR001138">
    <property type="entry name" value="Zn2Cys6_DnaBD"/>
</dbReference>
<dbReference type="PANTHER" id="PTHR31069:SF21">
    <property type="entry name" value="CHROMATIN STRUCTURE-REMODELING COMPLEX PROTEIN RSC3-RELATED"/>
    <property type="match status" value="1"/>
</dbReference>
<dbReference type="PANTHER" id="PTHR31069">
    <property type="entry name" value="OLEATE-ACTIVATED TRANSCRIPTION FACTOR 1-RELATED"/>
    <property type="match status" value="1"/>
</dbReference>
<dbReference type="Pfam" id="PF00172">
    <property type="entry name" value="Zn_clus"/>
    <property type="match status" value="1"/>
</dbReference>
<dbReference type="SMART" id="SM00066">
    <property type="entry name" value="GAL4"/>
    <property type="match status" value="1"/>
</dbReference>
<dbReference type="SUPFAM" id="SSF57701">
    <property type="entry name" value="Zn2/Cys6 DNA-binding domain"/>
    <property type="match status" value="1"/>
</dbReference>
<dbReference type="PROSITE" id="PS00463">
    <property type="entry name" value="ZN2_CY6_FUNGAL_1"/>
    <property type="match status" value="1"/>
</dbReference>
<dbReference type="PROSITE" id="PS50048">
    <property type="entry name" value="ZN2_CY6_FUNGAL_2"/>
    <property type="match status" value="1"/>
</dbReference>
<proteinExistence type="evidence at protein level"/>
<keyword id="KW-0002">3D-structure</keyword>
<keyword id="KW-0156">Chromatin regulator</keyword>
<keyword id="KW-0903">Direct protein sequencing</keyword>
<keyword id="KW-0238">DNA-binding</keyword>
<keyword id="KW-0479">Metal-binding</keyword>
<keyword id="KW-0539">Nucleus</keyword>
<keyword id="KW-0597">Phosphoprotein</keyword>
<keyword id="KW-1185">Reference proteome</keyword>
<keyword id="KW-0804">Transcription</keyword>
<keyword id="KW-0805">Transcription regulation</keyword>
<keyword id="KW-0862">Zinc</keyword>